<name>TPIS_STRA5</name>
<gene>
    <name evidence="1" type="primary">tpiA</name>
    <name type="ordered locus">SAG0763</name>
</gene>
<reference key="1">
    <citation type="journal article" date="2002" name="Proc. Natl. Acad. Sci. U.S.A.">
        <title>Complete genome sequence and comparative genomic analysis of an emerging human pathogen, serotype V Streptococcus agalactiae.</title>
        <authorList>
            <person name="Tettelin H."/>
            <person name="Masignani V."/>
            <person name="Cieslewicz M.J."/>
            <person name="Eisen J.A."/>
            <person name="Peterson S.N."/>
            <person name="Wessels M.R."/>
            <person name="Paulsen I.T."/>
            <person name="Nelson K.E."/>
            <person name="Margarit I."/>
            <person name="Read T.D."/>
            <person name="Madoff L.C."/>
            <person name="Wolf A.M."/>
            <person name="Beanan M.J."/>
            <person name="Brinkac L.M."/>
            <person name="Daugherty S.C."/>
            <person name="DeBoy R.T."/>
            <person name="Durkin A.S."/>
            <person name="Kolonay J.F."/>
            <person name="Madupu R."/>
            <person name="Lewis M.R."/>
            <person name="Radune D."/>
            <person name="Fedorova N.B."/>
            <person name="Scanlan D."/>
            <person name="Khouri H.M."/>
            <person name="Mulligan S."/>
            <person name="Carty H.A."/>
            <person name="Cline R.T."/>
            <person name="Van Aken S.E."/>
            <person name="Gill J."/>
            <person name="Scarselli M."/>
            <person name="Mora M."/>
            <person name="Iacobini E.T."/>
            <person name="Brettoni C."/>
            <person name="Galli G."/>
            <person name="Mariani M."/>
            <person name="Vegni F."/>
            <person name="Maione D."/>
            <person name="Rinaudo D."/>
            <person name="Rappuoli R."/>
            <person name="Telford J.L."/>
            <person name="Kasper D.L."/>
            <person name="Grandi G."/>
            <person name="Fraser C.M."/>
        </authorList>
    </citation>
    <scope>NUCLEOTIDE SEQUENCE [LARGE SCALE GENOMIC DNA]</scope>
    <source>
        <strain>ATCC BAA-611 / 2603 V/R</strain>
    </source>
</reference>
<organism>
    <name type="scientific">Streptococcus agalactiae serotype V (strain ATCC BAA-611 / 2603 V/R)</name>
    <dbReference type="NCBI Taxonomy" id="208435"/>
    <lineage>
        <taxon>Bacteria</taxon>
        <taxon>Bacillati</taxon>
        <taxon>Bacillota</taxon>
        <taxon>Bacilli</taxon>
        <taxon>Lactobacillales</taxon>
        <taxon>Streptococcaceae</taxon>
        <taxon>Streptococcus</taxon>
    </lineage>
</organism>
<dbReference type="EC" id="5.3.1.1" evidence="1"/>
<dbReference type="EMBL" id="AE009948">
    <property type="protein sequence ID" value="AAM99650.1"/>
    <property type="molecule type" value="Genomic_DNA"/>
</dbReference>
<dbReference type="RefSeq" id="NP_687778.1">
    <property type="nucleotide sequence ID" value="NC_004116.1"/>
</dbReference>
<dbReference type="RefSeq" id="WP_000087883.1">
    <property type="nucleotide sequence ID" value="NC_004116.1"/>
</dbReference>
<dbReference type="SMR" id="Q8E0H0"/>
<dbReference type="STRING" id="208435.SAG0763"/>
<dbReference type="GeneID" id="66885715"/>
<dbReference type="KEGG" id="sag:SAG0763"/>
<dbReference type="PATRIC" id="fig|208435.3.peg.770"/>
<dbReference type="HOGENOM" id="CLU_024251_2_3_9"/>
<dbReference type="OrthoDB" id="9809429at2"/>
<dbReference type="UniPathway" id="UPA00109">
    <property type="reaction ID" value="UER00189"/>
</dbReference>
<dbReference type="UniPathway" id="UPA00138"/>
<dbReference type="Proteomes" id="UP000000821">
    <property type="component" value="Chromosome"/>
</dbReference>
<dbReference type="GO" id="GO:0005829">
    <property type="term" value="C:cytosol"/>
    <property type="evidence" value="ECO:0007669"/>
    <property type="project" value="TreeGrafter"/>
</dbReference>
<dbReference type="GO" id="GO:0004807">
    <property type="term" value="F:triose-phosphate isomerase activity"/>
    <property type="evidence" value="ECO:0007669"/>
    <property type="project" value="UniProtKB-UniRule"/>
</dbReference>
<dbReference type="GO" id="GO:0006094">
    <property type="term" value="P:gluconeogenesis"/>
    <property type="evidence" value="ECO:0007669"/>
    <property type="project" value="UniProtKB-UniRule"/>
</dbReference>
<dbReference type="GO" id="GO:0046166">
    <property type="term" value="P:glyceraldehyde-3-phosphate biosynthetic process"/>
    <property type="evidence" value="ECO:0007669"/>
    <property type="project" value="TreeGrafter"/>
</dbReference>
<dbReference type="GO" id="GO:0019563">
    <property type="term" value="P:glycerol catabolic process"/>
    <property type="evidence" value="ECO:0007669"/>
    <property type="project" value="TreeGrafter"/>
</dbReference>
<dbReference type="GO" id="GO:0006096">
    <property type="term" value="P:glycolytic process"/>
    <property type="evidence" value="ECO:0007669"/>
    <property type="project" value="UniProtKB-UniRule"/>
</dbReference>
<dbReference type="CDD" id="cd00311">
    <property type="entry name" value="TIM"/>
    <property type="match status" value="1"/>
</dbReference>
<dbReference type="FunFam" id="3.20.20.70:FF:000016">
    <property type="entry name" value="Triosephosphate isomerase"/>
    <property type="match status" value="1"/>
</dbReference>
<dbReference type="Gene3D" id="3.20.20.70">
    <property type="entry name" value="Aldolase class I"/>
    <property type="match status" value="1"/>
</dbReference>
<dbReference type="HAMAP" id="MF_00147_B">
    <property type="entry name" value="TIM_B"/>
    <property type="match status" value="1"/>
</dbReference>
<dbReference type="InterPro" id="IPR013785">
    <property type="entry name" value="Aldolase_TIM"/>
</dbReference>
<dbReference type="InterPro" id="IPR035990">
    <property type="entry name" value="TIM_sf"/>
</dbReference>
<dbReference type="InterPro" id="IPR022896">
    <property type="entry name" value="TrioseP_Isoase_bac/euk"/>
</dbReference>
<dbReference type="InterPro" id="IPR000652">
    <property type="entry name" value="Triosephosphate_isomerase"/>
</dbReference>
<dbReference type="InterPro" id="IPR020861">
    <property type="entry name" value="Triosephosphate_isomerase_AS"/>
</dbReference>
<dbReference type="NCBIfam" id="TIGR00419">
    <property type="entry name" value="tim"/>
    <property type="match status" value="1"/>
</dbReference>
<dbReference type="PANTHER" id="PTHR21139">
    <property type="entry name" value="TRIOSEPHOSPHATE ISOMERASE"/>
    <property type="match status" value="1"/>
</dbReference>
<dbReference type="PANTHER" id="PTHR21139:SF42">
    <property type="entry name" value="TRIOSEPHOSPHATE ISOMERASE"/>
    <property type="match status" value="1"/>
</dbReference>
<dbReference type="Pfam" id="PF00121">
    <property type="entry name" value="TIM"/>
    <property type="match status" value="1"/>
</dbReference>
<dbReference type="SUPFAM" id="SSF51351">
    <property type="entry name" value="Triosephosphate isomerase (TIM)"/>
    <property type="match status" value="1"/>
</dbReference>
<dbReference type="PROSITE" id="PS00171">
    <property type="entry name" value="TIM_1"/>
    <property type="match status" value="1"/>
</dbReference>
<dbReference type="PROSITE" id="PS51440">
    <property type="entry name" value="TIM_2"/>
    <property type="match status" value="1"/>
</dbReference>
<keyword id="KW-0963">Cytoplasm</keyword>
<keyword id="KW-0312">Gluconeogenesis</keyword>
<keyword id="KW-0324">Glycolysis</keyword>
<keyword id="KW-0413">Isomerase</keyword>
<keyword id="KW-1185">Reference proteome</keyword>
<sequence>MSRKPFIAGNWKMNKNPEEAKAFIEAVASKLPSSELVEAGIAAPALTLSTVLEAAKGSELKIAAQNSYFENSGAFTGENSPKVLAEMGTDYVVIGHSERRDYFHETDQDINKKAKAIFANGLTPIICCGESLETYEAGKAVEFVGAQVSAALAGLSEEQVSSLVIAYEPIWAIGTGKSATQDDAQNMCKAVRDVVAADFGQAVADKVRVQYGGSVKPENVAEYMACPDVDGALVGGASLEAESFLALLDFVK</sequence>
<protein>
    <recommendedName>
        <fullName evidence="1">Triosephosphate isomerase</fullName>
        <shortName evidence="1">TIM</shortName>
        <shortName evidence="1">TPI</shortName>
        <ecNumber evidence="1">5.3.1.1</ecNumber>
    </recommendedName>
    <alternativeName>
        <fullName evidence="1">Triose-phosphate isomerase</fullName>
    </alternativeName>
</protein>
<comment type="function">
    <text evidence="1">Involved in the gluconeogenesis. Catalyzes stereospecifically the conversion of dihydroxyacetone phosphate (DHAP) to D-glyceraldehyde-3-phosphate (G3P).</text>
</comment>
<comment type="catalytic activity">
    <reaction evidence="1">
        <text>D-glyceraldehyde 3-phosphate = dihydroxyacetone phosphate</text>
        <dbReference type="Rhea" id="RHEA:18585"/>
        <dbReference type="ChEBI" id="CHEBI:57642"/>
        <dbReference type="ChEBI" id="CHEBI:59776"/>
        <dbReference type="EC" id="5.3.1.1"/>
    </reaction>
</comment>
<comment type="pathway">
    <text evidence="1">Carbohydrate biosynthesis; gluconeogenesis.</text>
</comment>
<comment type="pathway">
    <text evidence="1">Carbohydrate degradation; glycolysis; D-glyceraldehyde 3-phosphate from glycerone phosphate: step 1/1.</text>
</comment>
<comment type="subunit">
    <text evidence="1">Homodimer.</text>
</comment>
<comment type="subcellular location">
    <subcellularLocation>
        <location evidence="1">Cytoplasm</location>
    </subcellularLocation>
</comment>
<comment type="similarity">
    <text evidence="1">Belongs to the triosephosphate isomerase family.</text>
</comment>
<proteinExistence type="inferred from homology"/>
<accession>Q8E0H0</accession>
<evidence type="ECO:0000255" key="1">
    <source>
        <dbReference type="HAMAP-Rule" id="MF_00147"/>
    </source>
</evidence>
<feature type="chain" id="PRO_0000090293" description="Triosephosphate isomerase">
    <location>
        <begin position="1"/>
        <end position="252"/>
    </location>
</feature>
<feature type="active site" description="Electrophile" evidence="1">
    <location>
        <position position="96"/>
    </location>
</feature>
<feature type="active site" description="Proton acceptor" evidence="1">
    <location>
        <position position="168"/>
    </location>
</feature>
<feature type="binding site" evidence="1">
    <location>
        <begin position="10"/>
        <end position="12"/>
    </location>
    <ligand>
        <name>substrate</name>
    </ligand>
</feature>
<feature type="binding site" evidence="1">
    <location>
        <position position="174"/>
    </location>
    <ligand>
        <name>substrate</name>
    </ligand>
</feature>
<feature type="binding site" evidence="1">
    <location>
        <position position="214"/>
    </location>
    <ligand>
        <name>substrate</name>
    </ligand>
</feature>
<feature type="binding site" evidence="1">
    <location>
        <begin position="235"/>
        <end position="236"/>
    </location>
    <ligand>
        <name>substrate</name>
    </ligand>
</feature>